<feature type="chain" id="PRO_0000356443" description="Large ribosomal subunit protein bL33">
    <location>
        <begin position="1"/>
        <end position="51"/>
    </location>
</feature>
<proteinExistence type="inferred from homology"/>
<gene>
    <name evidence="1" type="primary">rpmG</name>
    <name type="ordered locus">CPS_0210</name>
</gene>
<comment type="similarity">
    <text evidence="1">Belongs to the bacterial ribosomal protein bL33 family.</text>
</comment>
<dbReference type="EMBL" id="CP000083">
    <property type="protein sequence ID" value="AAZ25304.1"/>
    <property type="molecule type" value="Genomic_DNA"/>
</dbReference>
<dbReference type="RefSeq" id="WP_011041084.1">
    <property type="nucleotide sequence ID" value="NC_003910.7"/>
</dbReference>
<dbReference type="SMR" id="Q48AD6"/>
<dbReference type="STRING" id="167879.CPS_0210"/>
<dbReference type="KEGG" id="cps:CPS_0210"/>
<dbReference type="eggNOG" id="COG0267">
    <property type="taxonomic scope" value="Bacteria"/>
</dbReference>
<dbReference type="HOGENOM" id="CLU_190949_1_1_6"/>
<dbReference type="Proteomes" id="UP000000547">
    <property type="component" value="Chromosome"/>
</dbReference>
<dbReference type="GO" id="GO:0022625">
    <property type="term" value="C:cytosolic large ribosomal subunit"/>
    <property type="evidence" value="ECO:0007669"/>
    <property type="project" value="TreeGrafter"/>
</dbReference>
<dbReference type="GO" id="GO:0003735">
    <property type="term" value="F:structural constituent of ribosome"/>
    <property type="evidence" value="ECO:0007669"/>
    <property type="project" value="InterPro"/>
</dbReference>
<dbReference type="GO" id="GO:0006412">
    <property type="term" value="P:translation"/>
    <property type="evidence" value="ECO:0007669"/>
    <property type="project" value="UniProtKB-UniRule"/>
</dbReference>
<dbReference type="FunFam" id="2.20.28.120:FF:000001">
    <property type="entry name" value="50S ribosomal protein L33"/>
    <property type="match status" value="1"/>
</dbReference>
<dbReference type="Gene3D" id="2.20.28.120">
    <property type="entry name" value="Ribosomal protein L33"/>
    <property type="match status" value="1"/>
</dbReference>
<dbReference type="HAMAP" id="MF_00294">
    <property type="entry name" value="Ribosomal_bL33"/>
    <property type="match status" value="1"/>
</dbReference>
<dbReference type="InterPro" id="IPR001705">
    <property type="entry name" value="Ribosomal_bL33"/>
</dbReference>
<dbReference type="InterPro" id="IPR018264">
    <property type="entry name" value="Ribosomal_bL33_CS"/>
</dbReference>
<dbReference type="InterPro" id="IPR038584">
    <property type="entry name" value="Ribosomal_bL33_sf"/>
</dbReference>
<dbReference type="InterPro" id="IPR011332">
    <property type="entry name" value="Ribosomal_zn-bd"/>
</dbReference>
<dbReference type="NCBIfam" id="NF001860">
    <property type="entry name" value="PRK00595.1"/>
    <property type="match status" value="1"/>
</dbReference>
<dbReference type="NCBIfam" id="TIGR01023">
    <property type="entry name" value="rpmG_bact"/>
    <property type="match status" value="1"/>
</dbReference>
<dbReference type="PANTHER" id="PTHR15238">
    <property type="entry name" value="54S RIBOSOMAL PROTEIN L39, MITOCHONDRIAL"/>
    <property type="match status" value="1"/>
</dbReference>
<dbReference type="PANTHER" id="PTHR15238:SF1">
    <property type="entry name" value="LARGE RIBOSOMAL SUBUNIT PROTEIN BL33M"/>
    <property type="match status" value="1"/>
</dbReference>
<dbReference type="Pfam" id="PF00471">
    <property type="entry name" value="Ribosomal_L33"/>
    <property type="match status" value="1"/>
</dbReference>
<dbReference type="SUPFAM" id="SSF57829">
    <property type="entry name" value="Zn-binding ribosomal proteins"/>
    <property type="match status" value="1"/>
</dbReference>
<dbReference type="PROSITE" id="PS00582">
    <property type="entry name" value="RIBOSOMAL_L33"/>
    <property type="match status" value="1"/>
</dbReference>
<reference key="1">
    <citation type="journal article" date="2005" name="Proc. Natl. Acad. Sci. U.S.A.">
        <title>The psychrophilic lifestyle as revealed by the genome sequence of Colwellia psychrerythraea 34H through genomic and proteomic analyses.</title>
        <authorList>
            <person name="Methe B.A."/>
            <person name="Nelson K.E."/>
            <person name="Deming J.W."/>
            <person name="Momen B."/>
            <person name="Melamud E."/>
            <person name="Zhang X."/>
            <person name="Moult J."/>
            <person name="Madupu R."/>
            <person name="Nelson W.C."/>
            <person name="Dodson R.J."/>
            <person name="Brinkac L.M."/>
            <person name="Daugherty S.C."/>
            <person name="Durkin A.S."/>
            <person name="DeBoy R.T."/>
            <person name="Kolonay J.F."/>
            <person name="Sullivan S.A."/>
            <person name="Zhou L."/>
            <person name="Davidsen T.M."/>
            <person name="Wu M."/>
            <person name="Huston A.L."/>
            <person name="Lewis M."/>
            <person name="Weaver B."/>
            <person name="Weidman J.F."/>
            <person name="Khouri H."/>
            <person name="Utterback T.R."/>
            <person name="Feldblyum T.V."/>
            <person name="Fraser C.M."/>
        </authorList>
    </citation>
    <scope>NUCLEOTIDE SEQUENCE [LARGE SCALE GENOMIC DNA]</scope>
    <source>
        <strain>34H / ATCC BAA-681</strain>
    </source>
</reference>
<name>RL33_COLP3</name>
<keyword id="KW-0687">Ribonucleoprotein</keyword>
<keyword id="KW-0689">Ribosomal protein</keyword>
<protein>
    <recommendedName>
        <fullName evidence="1">Large ribosomal subunit protein bL33</fullName>
    </recommendedName>
    <alternativeName>
        <fullName evidence="2">50S ribosomal protein L33</fullName>
    </alternativeName>
</protein>
<organism>
    <name type="scientific">Colwellia psychrerythraea (strain 34H / ATCC BAA-681)</name>
    <name type="common">Vibrio psychroerythus</name>
    <dbReference type="NCBI Taxonomy" id="167879"/>
    <lineage>
        <taxon>Bacteria</taxon>
        <taxon>Pseudomonadati</taxon>
        <taxon>Pseudomonadota</taxon>
        <taxon>Gammaproteobacteria</taxon>
        <taxon>Alteromonadales</taxon>
        <taxon>Colwelliaceae</taxon>
        <taxon>Colwellia</taxon>
    </lineage>
</organism>
<accession>Q48AD6</accession>
<sequence>MRDKIRLVSSAGTGHFYTTDKNKKTMPEKMEIKKFDPTIRKHVIYKEAKIK</sequence>
<evidence type="ECO:0000255" key="1">
    <source>
        <dbReference type="HAMAP-Rule" id="MF_00294"/>
    </source>
</evidence>
<evidence type="ECO:0000305" key="2"/>